<protein>
    <recommendedName>
        <fullName evidence="1">Glutamate-1-semialdehyde 2,1-aminomutase</fullName>
        <shortName evidence="1">GSA</shortName>
        <ecNumber evidence="1">5.4.3.8</ecNumber>
    </recommendedName>
    <alternativeName>
        <fullName evidence="1">Glutamate-1-semialdehyde aminotransferase</fullName>
        <shortName evidence="1">GSA-AT</shortName>
    </alternativeName>
</protein>
<comment type="catalytic activity">
    <reaction evidence="1">
        <text>(S)-4-amino-5-oxopentanoate = 5-aminolevulinate</text>
        <dbReference type="Rhea" id="RHEA:14265"/>
        <dbReference type="ChEBI" id="CHEBI:57501"/>
        <dbReference type="ChEBI" id="CHEBI:356416"/>
        <dbReference type="EC" id="5.4.3.8"/>
    </reaction>
</comment>
<comment type="cofactor">
    <cofactor evidence="1">
        <name>pyridoxal 5'-phosphate</name>
        <dbReference type="ChEBI" id="CHEBI:597326"/>
    </cofactor>
</comment>
<comment type="pathway">
    <text evidence="1">Porphyrin-containing compound metabolism; protoporphyrin-IX biosynthesis; 5-aminolevulinate from L-glutamyl-tRNA(Glu): step 2/2.</text>
</comment>
<comment type="subunit">
    <text evidence="1">Homodimer.</text>
</comment>
<comment type="subcellular location">
    <subcellularLocation>
        <location evidence="1">Cytoplasm</location>
    </subcellularLocation>
</comment>
<comment type="similarity">
    <text evidence="1">Belongs to the class-III pyridoxal-phosphate-dependent aminotransferase family. HemL subfamily.</text>
</comment>
<proteinExistence type="inferred from homology"/>
<evidence type="ECO:0000255" key="1">
    <source>
        <dbReference type="HAMAP-Rule" id="MF_00375"/>
    </source>
</evidence>
<sequence>MTRSEALFEQAKKTIPGGVNSPVRAFNGVGGSPLFIEKANGAYIYDADGKAYIDYVGSWGPMILGHNHPKIRAAVLAAVENGLSFGAPTELEVQMAEKVISMVPSIEQVRMVSSGTEATMSAIRLARGFTNRDKILKFEGCYHGHADCLLVKAGSGALTLGQPSSPGIPEDFAKHTLTAVYNDLDSVRTLFEQYPTDISCIIIEPVAGNMNCIPPIPGFLQGLRDICDEFGALMIIDEVMTGFRVSQSGAQGYYGVTPDLTTLGKVIGGGMPVGAFGGRKDVMQFIAPTGPVYQAGTLSGNPIAMSAGLAQMEALCEEGLYEKLSAKTKRIAEGFKAAADKHGIPMAINYVGGMFGFFFTEQPEITRFDQVTQCNIEQFRIFYHGMLDEGVYLAPSAYEAGFLSMAHGEEEMRLTLEAADRVLASMKAAS</sequence>
<organism>
    <name type="scientific">Shewanella baltica (strain OS155 / ATCC BAA-1091)</name>
    <dbReference type="NCBI Taxonomy" id="325240"/>
    <lineage>
        <taxon>Bacteria</taxon>
        <taxon>Pseudomonadati</taxon>
        <taxon>Pseudomonadota</taxon>
        <taxon>Gammaproteobacteria</taxon>
        <taxon>Alteromonadales</taxon>
        <taxon>Shewanellaceae</taxon>
        <taxon>Shewanella</taxon>
    </lineage>
</organism>
<dbReference type="EC" id="5.4.3.8" evidence="1"/>
<dbReference type="EMBL" id="CP000563">
    <property type="protein sequence ID" value="ABN60678.1"/>
    <property type="molecule type" value="Genomic_DNA"/>
</dbReference>
<dbReference type="RefSeq" id="WP_011846147.1">
    <property type="nucleotide sequence ID" value="NC_009052.1"/>
</dbReference>
<dbReference type="SMR" id="A3D1R5"/>
<dbReference type="STRING" id="325240.Sbal_1159"/>
<dbReference type="KEGG" id="sbl:Sbal_1159"/>
<dbReference type="HOGENOM" id="CLU_016922_1_5_6"/>
<dbReference type="OrthoDB" id="9801052at2"/>
<dbReference type="UniPathway" id="UPA00251">
    <property type="reaction ID" value="UER00317"/>
</dbReference>
<dbReference type="Proteomes" id="UP000001557">
    <property type="component" value="Chromosome"/>
</dbReference>
<dbReference type="GO" id="GO:0005737">
    <property type="term" value="C:cytoplasm"/>
    <property type="evidence" value="ECO:0007669"/>
    <property type="project" value="UniProtKB-SubCell"/>
</dbReference>
<dbReference type="GO" id="GO:0042286">
    <property type="term" value="F:glutamate-1-semialdehyde 2,1-aminomutase activity"/>
    <property type="evidence" value="ECO:0007669"/>
    <property type="project" value="UniProtKB-UniRule"/>
</dbReference>
<dbReference type="GO" id="GO:0030170">
    <property type="term" value="F:pyridoxal phosphate binding"/>
    <property type="evidence" value="ECO:0007669"/>
    <property type="project" value="InterPro"/>
</dbReference>
<dbReference type="GO" id="GO:0008483">
    <property type="term" value="F:transaminase activity"/>
    <property type="evidence" value="ECO:0007669"/>
    <property type="project" value="InterPro"/>
</dbReference>
<dbReference type="GO" id="GO:0006782">
    <property type="term" value="P:protoporphyrinogen IX biosynthetic process"/>
    <property type="evidence" value="ECO:0007669"/>
    <property type="project" value="UniProtKB-UniRule"/>
</dbReference>
<dbReference type="CDD" id="cd00610">
    <property type="entry name" value="OAT_like"/>
    <property type="match status" value="1"/>
</dbReference>
<dbReference type="FunFam" id="3.40.640.10:FF:000021">
    <property type="entry name" value="Glutamate-1-semialdehyde 2,1-aminomutase"/>
    <property type="match status" value="1"/>
</dbReference>
<dbReference type="Gene3D" id="3.90.1150.10">
    <property type="entry name" value="Aspartate Aminotransferase, domain 1"/>
    <property type="match status" value="1"/>
</dbReference>
<dbReference type="Gene3D" id="3.40.640.10">
    <property type="entry name" value="Type I PLP-dependent aspartate aminotransferase-like (Major domain)"/>
    <property type="match status" value="1"/>
</dbReference>
<dbReference type="HAMAP" id="MF_00375">
    <property type="entry name" value="HemL_aminotrans_3"/>
    <property type="match status" value="1"/>
</dbReference>
<dbReference type="InterPro" id="IPR004639">
    <property type="entry name" value="4pyrrol_synth_GluAld_NH2Trfase"/>
</dbReference>
<dbReference type="InterPro" id="IPR005814">
    <property type="entry name" value="Aminotrans_3"/>
</dbReference>
<dbReference type="InterPro" id="IPR049704">
    <property type="entry name" value="Aminotrans_3_PPA_site"/>
</dbReference>
<dbReference type="InterPro" id="IPR015424">
    <property type="entry name" value="PyrdxlP-dep_Trfase"/>
</dbReference>
<dbReference type="InterPro" id="IPR015421">
    <property type="entry name" value="PyrdxlP-dep_Trfase_major"/>
</dbReference>
<dbReference type="InterPro" id="IPR015422">
    <property type="entry name" value="PyrdxlP-dep_Trfase_small"/>
</dbReference>
<dbReference type="NCBIfam" id="TIGR00713">
    <property type="entry name" value="hemL"/>
    <property type="match status" value="1"/>
</dbReference>
<dbReference type="NCBIfam" id="NF000818">
    <property type="entry name" value="PRK00062.1"/>
    <property type="match status" value="1"/>
</dbReference>
<dbReference type="PANTHER" id="PTHR43713">
    <property type="entry name" value="GLUTAMATE-1-SEMIALDEHYDE 2,1-AMINOMUTASE"/>
    <property type="match status" value="1"/>
</dbReference>
<dbReference type="PANTHER" id="PTHR43713:SF3">
    <property type="entry name" value="GLUTAMATE-1-SEMIALDEHYDE 2,1-AMINOMUTASE 1, CHLOROPLASTIC-RELATED"/>
    <property type="match status" value="1"/>
</dbReference>
<dbReference type="Pfam" id="PF00202">
    <property type="entry name" value="Aminotran_3"/>
    <property type="match status" value="1"/>
</dbReference>
<dbReference type="SUPFAM" id="SSF53383">
    <property type="entry name" value="PLP-dependent transferases"/>
    <property type="match status" value="1"/>
</dbReference>
<dbReference type="PROSITE" id="PS00600">
    <property type="entry name" value="AA_TRANSFER_CLASS_3"/>
    <property type="match status" value="1"/>
</dbReference>
<gene>
    <name evidence="1" type="primary">hemL</name>
    <name type="ordered locus">Sbal_1159</name>
</gene>
<keyword id="KW-0963">Cytoplasm</keyword>
<keyword id="KW-0413">Isomerase</keyword>
<keyword id="KW-0627">Porphyrin biosynthesis</keyword>
<keyword id="KW-0663">Pyridoxal phosphate</keyword>
<keyword id="KW-1185">Reference proteome</keyword>
<accession>A3D1R5</accession>
<name>GSA_SHEB5</name>
<reference key="1">
    <citation type="submission" date="2007-02" db="EMBL/GenBank/DDBJ databases">
        <title>Complete sequence of chromosome of Shewanella baltica OS155.</title>
        <authorList>
            <consortium name="US DOE Joint Genome Institute"/>
            <person name="Copeland A."/>
            <person name="Lucas S."/>
            <person name="Lapidus A."/>
            <person name="Barry K."/>
            <person name="Detter J.C."/>
            <person name="Glavina del Rio T."/>
            <person name="Hammon N."/>
            <person name="Israni S."/>
            <person name="Dalin E."/>
            <person name="Tice H."/>
            <person name="Pitluck S."/>
            <person name="Sims D.R."/>
            <person name="Brettin T."/>
            <person name="Bruce D."/>
            <person name="Han C."/>
            <person name="Tapia R."/>
            <person name="Brainard J."/>
            <person name="Schmutz J."/>
            <person name="Larimer F."/>
            <person name="Land M."/>
            <person name="Hauser L."/>
            <person name="Kyrpides N."/>
            <person name="Mikhailova N."/>
            <person name="Brettar I."/>
            <person name="Klappenbach J."/>
            <person name="Konstantinidis K."/>
            <person name="Rodrigues J."/>
            <person name="Tiedje J."/>
            <person name="Richardson P."/>
        </authorList>
    </citation>
    <scope>NUCLEOTIDE SEQUENCE [LARGE SCALE GENOMIC DNA]</scope>
    <source>
        <strain>OS155 / ATCC BAA-1091</strain>
    </source>
</reference>
<feature type="chain" id="PRO_1000060000" description="Glutamate-1-semialdehyde 2,1-aminomutase">
    <location>
        <begin position="1"/>
        <end position="430"/>
    </location>
</feature>
<feature type="modified residue" description="N6-(pyridoxal phosphate)lysine" evidence="1">
    <location>
        <position position="265"/>
    </location>
</feature>